<dbReference type="EC" id="2.1.1.-" evidence="2"/>
<dbReference type="EMBL" id="AJ248285">
    <property type="protein sequence ID" value="CAB49683.1"/>
    <property type="molecule type" value="Genomic_DNA"/>
</dbReference>
<dbReference type="EMBL" id="HE613800">
    <property type="protein sequence ID" value="CCE70165.1"/>
    <property type="molecule type" value="Genomic_DNA"/>
</dbReference>
<dbReference type="PIR" id="B75121">
    <property type="entry name" value="B75121"/>
</dbReference>
<dbReference type="RefSeq" id="WP_010867891.1">
    <property type="nucleotide sequence ID" value="NC_000868.1"/>
</dbReference>
<dbReference type="SMR" id="Q9V0M0"/>
<dbReference type="STRING" id="272844.PAB1852"/>
<dbReference type="KEGG" id="pab:PAB1852"/>
<dbReference type="PATRIC" id="fig|272844.11.peg.809"/>
<dbReference type="eggNOG" id="arCOG04122">
    <property type="taxonomic scope" value="Archaea"/>
</dbReference>
<dbReference type="HOGENOM" id="CLU_055846_1_3_2"/>
<dbReference type="OrthoDB" id="7612at2157"/>
<dbReference type="PhylomeDB" id="Q9V0M0"/>
<dbReference type="Proteomes" id="UP000000810">
    <property type="component" value="Chromosome"/>
</dbReference>
<dbReference type="Proteomes" id="UP000009139">
    <property type="component" value="Chromosome"/>
</dbReference>
<dbReference type="GO" id="GO:0070037">
    <property type="term" value="F:rRNA (pseudouridine) methyltransferase activity"/>
    <property type="evidence" value="ECO:0007669"/>
    <property type="project" value="UniProtKB-UniRule"/>
</dbReference>
<dbReference type="GO" id="GO:0019843">
    <property type="term" value="F:rRNA binding"/>
    <property type="evidence" value="ECO:0007669"/>
    <property type="project" value="UniProtKB-UniRule"/>
</dbReference>
<dbReference type="GO" id="GO:0070475">
    <property type="term" value="P:rRNA base methylation"/>
    <property type="evidence" value="ECO:0007669"/>
    <property type="project" value="InterPro"/>
</dbReference>
<dbReference type="CDD" id="cd18088">
    <property type="entry name" value="Nep1-like"/>
    <property type="match status" value="1"/>
</dbReference>
<dbReference type="FunFam" id="3.40.1280.10:FF:000042">
    <property type="entry name" value="Ribosomal RNA small subunit methyltransferase Nep1"/>
    <property type="match status" value="1"/>
</dbReference>
<dbReference type="Gene3D" id="3.40.1280.10">
    <property type="match status" value="1"/>
</dbReference>
<dbReference type="HAMAP" id="MF_00554">
    <property type="entry name" value="NEP1"/>
    <property type="match status" value="1"/>
</dbReference>
<dbReference type="InterPro" id="IPR029028">
    <property type="entry name" value="Alpha/beta_knot_MTases"/>
</dbReference>
<dbReference type="InterPro" id="IPR005304">
    <property type="entry name" value="Rbsml_bgen_MeTrfase_EMG1/NEP1"/>
</dbReference>
<dbReference type="InterPro" id="IPR023503">
    <property type="entry name" value="Ribosome_NEP1_arc"/>
</dbReference>
<dbReference type="InterPro" id="IPR029026">
    <property type="entry name" value="tRNA_m1G_MTases_N"/>
</dbReference>
<dbReference type="NCBIfam" id="NF003205">
    <property type="entry name" value="PRK04171.1-5"/>
    <property type="match status" value="1"/>
</dbReference>
<dbReference type="NCBIfam" id="NF003207">
    <property type="entry name" value="PRK04171.2-2"/>
    <property type="match status" value="1"/>
</dbReference>
<dbReference type="PANTHER" id="PTHR12636">
    <property type="entry name" value="NEP1/MRA1"/>
    <property type="match status" value="1"/>
</dbReference>
<dbReference type="PANTHER" id="PTHR12636:SF5">
    <property type="entry name" value="RIBOSOMAL RNA SMALL SUBUNIT METHYLTRANSFERASE NEP1"/>
    <property type="match status" value="1"/>
</dbReference>
<dbReference type="Pfam" id="PF03587">
    <property type="entry name" value="EMG1"/>
    <property type="match status" value="1"/>
</dbReference>
<dbReference type="SUPFAM" id="SSF75217">
    <property type="entry name" value="alpha/beta knot"/>
    <property type="match status" value="1"/>
</dbReference>
<proteinExistence type="inferred from homology"/>
<feature type="chain" id="PRO_0000158617" description="Ribosomal RNA small subunit methyltransferase Nep1">
    <location>
        <begin position="1"/>
        <end position="232"/>
    </location>
</feature>
<feature type="binding site" evidence="2">
    <location>
        <position position="183"/>
    </location>
    <ligand>
        <name>S-adenosyl-L-methionine</name>
        <dbReference type="ChEBI" id="CHEBI:59789"/>
    </ligand>
</feature>
<feature type="binding site" evidence="2">
    <location>
        <position position="188"/>
    </location>
    <ligand>
        <name>S-adenosyl-L-methionine</name>
        <dbReference type="ChEBI" id="CHEBI:59789"/>
    </ligand>
</feature>
<feature type="binding site" evidence="2">
    <location>
        <begin position="201"/>
        <end position="206"/>
    </location>
    <ligand>
        <name>S-adenosyl-L-methionine</name>
        <dbReference type="ChEBI" id="CHEBI:59789"/>
    </ligand>
</feature>
<feature type="site" description="Interaction with substrate rRNA" evidence="2">
    <location>
        <position position="65"/>
    </location>
</feature>
<feature type="site" description="Stabilizes Arg-65" evidence="2">
    <location>
        <position position="67"/>
    </location>
</feature>
<feature type="site" description="Interaction with substrate rRNA" evidence="2">
    <location>
        <position position="106"/>
    </location>
</feature>
<feature type="site" description="Interaction with substrate rRNA" evidence="2">
    <location>
        <position position="109"/>
    </location>
</feature>
<feature type="site" description="Interaction with substrate rRNA" evidence="2">
    <location>
        <position position="113"/>
    </location>
</feature>
<comment type="function">
    <text evidence="1">Methyltransferase involved in ribosomal biogenesis. Specifically catalyzes the N1-methylation of the pseudouridine corresponding to position 914 in M.jannaschii 16S rRNA (By similarity).</text>
</comment>
<comment type="catalytic activity">
    <reaction evidence="2">
        <text>a pseudouridine in rRNA + S-adenosyl-L-methionine = an N(1)-methylpseudouridine in rRNA + S-adenosyl-L-homocysteine + H(+)</text>
        <dbReference type="Rhea" id="RHEA:46696"/>
        <dbReference type="Rhea" id="RHEA-COMP:11634"/>
        <dbReference type="Rhea" id="RHEA-COMP:13933"/>
        <dbReference type="ChEBI" id="CHEBI:15378"/>
        <dbReference type="ChEBI" id="CHEBI:57856"/>
        <dbReference type="ChEBI" id="CHEBI:59789"/>
        <dbReference type="ChEBI" id="CHEBI:65314"/>
        <dbReference type="ChEBI" id="CHEBI:74890"/>
    </reaction>
</comment>
<comment type="subunit">
    <text evidence="1">Homodimer.</text>
</comment>
<comment type="similarity">
    <text evidence="3">Belongs to the class IV-like SAM-binding methyltransferase superfamily. RNA methyltransferase NEP1 family.</text>
</comment>
<organism>
    <name type="scientific">Pyrococcus abyssi (strain GE5 / Orsay)</name>
    <dbReference type="NCBI Taxonomy" id="272844"/>
    <lineage>
        <taxon>Archaea</taxon>
        <taxon>Methanobacteriati</taxon>
        <taxon>Methanobacteriota</taxon>
        <taxon>Thermococci</taxon>
        <taxon>Thermococcales</taxon>
        <taxon>Thermococcaceae</taxon>
        <taxon>Pyrococcus</taxon>
    </lineage>
</organism>
<accession>Q9V0M0</accession>
<accession>G8ZGX0</accession>
<reference key="1">
    <citation type="journal article" date="2003" name="Mol. Microbiol.">
        <title>An integrated analysis of the genome of the hyperthermophilic archaeon Pyrococcus abyssi.</title>
        <authorList>
            <person name="Cohen G.N."/>
            <person name="Barbe V."/>
            <person name="Flament D."/>
            <person name="Galperin M."/>
            <person name="Heilig R."/>
            <person name="Lecompte O."/>
            <person name="Poch O."/>
            <person name="Prieur D."/>
            <person name="Querellou J."/>
            <person name="Ripp R."/>
            <person name="Thierry J.-C."/>
            <person name="Van der Oost J."/>
            <person name="Weissenbach J."/>
            <person name="Zivanovic Y."/>
            <person name="Forterre P."/>
        </authorList>
    </citation>
    <scope>NUCLEOTIDE SEQUENCE [LARGE SCALE GENOMIC DNA]</scope>
    <source>
        <strain>GE5 / Orsay</strain>
    </source>
</reference>
<reference key="2">
    <citation type="journal article" date="2012" name="Curr. Microbiol.">
        <title>Re-annotation of two hyperthermophilic archaea Pyrococcus abyssi GE5 and Pyrococcus furiosus DSM 3638.</title>
        <authorList>
            <person name="Gao J."/>
            <person name="Wang J."/>
        </authorList>
    </citation>
    <scope>GENOME REANNOTATION</scope>
    <source>
        <strain>GE5 / Orsay</strain>
    </source>
</reference>
<gene>
    <name type="primary">nep1</name>
    <name type="ordered locus">PYRAB07690</name>
    <name type="ORF">PAB1852</name>
</gene>
<keyword id="KW-0489">Methyltransferase</keyword>
<keyword id="KW-0690">Ribosome biogenesis</keyword>
<keyword id="KW-0694">RNA-binding</keyword>
<keyword id="KW-0698">rRNA processing</keyword>
<keyword id="KW-0699">rRNA-binding</keyword>
<keyword id="KW-0949">S-adenosyl-L-methionine</keyword>
<keyword id="KW-0808">Transferase</keyword>
<protein>
    <recommendedName>
        <fullName evidence="2">Ribosomal RNA small subunit methyltransferase Nep1</fullName>
        <ecNumber evidence="2">2.1.1.-</ecNumber>
    </recommendedName>
    <alternativeName>
        <fullName evidence="2">16S rRNA (pseudouridine-N1-)-methyltransferase Nep1</fullName>
    </alternativeName>
</protein>
<name>NEP1_PYRAB</name>
<evidence type="ECO:0000250" key="1"/>
<evidence type="ECO:0000255" key="2">
    <source>
        <dbReference type="HAMAP-Rule" id="MF_00554"/>
    </source>
</evidence>
<evidence type="ECO:0000305" key="3"/>
<sequence length="232" mass="27169">MSEKKRLHLIIADAELETVPEQILDHPAIVNYAKRRKRKPEKIILDSTYHHAALKQLEDGERRGRPDIVHICLLNALDSILNKEDRLRVYVHTRNDYVIYIKPETRLPRNYNRFIGLMESLFEKGAVPEDLELLRLERKTLQELINEINPDAVFVMHEEGELMIPKNFGKLLDKFKKPAVIIGGFPHGDFRSRVEGVKISLYKEPLMAWTIVNEVIVSYEWEVIKKFSTKFI</sequence>